<protein>
    <recommendedName>
        <fullName>Putative ankyrin repeat protein FPV031</fullName>
    </recommendedName>
</protein>
<dbReference type="EMBL" id="AJ006408">
    <property type="protein sequence ID" value="CAA07013.1"/>
    <property type="molecule type" value="Genomic_DNA"/>
</dbReference>
<dbReference type="EMBL" id="AF198100">
    <property type="protein sequence ID" value="AAF44375.1"/>
    <property type="molecule type" value="Genomic_DNA"/>
</dbReference>
<dbReference type="RefSeq" id="NP_038994.1">
    <property type="nucleotide sequence ID" value="NC_002188.1"/>
</dbReference>
<dbReference type="SMR" id="O90760"/>
<dbReference type="GeneID" id="1486750"/>
<dbReference type="KEGG" id="vg:1486750"/>
<dbReference type="Proteomes" id="UP000008597">
    <property type="component" value="Segment"/>
</dbReference>
<dbReference type="Gene3D" id="1.25.40.20">
    <property type="entry name" value="Ankyrin repeat-containing domain"/>
    <property type="match status" value="1"/>
</dbReference>
<dbReference type="InterPro" id="IPR002110">
    <property type="entry name" value="Ankyrin_rpt"/>
</dbReference>
<dbReference type="InterPro" id="IPR036770">
    <property type="entry name" value="Ankyrin_rpt-contain_sf"/>
</dbReference>
<dbReference type="InterPro" id="IPR018272">
    <property type="entry name" value="PRANC_domain"/>
</dbReference>
<dbReference type="PANTHER" id="PTHR24171:SF9">
    <property type="entry name" value="ANKYRIN REPEAT DOMAIN-CONTAINING PROTEIN 39"/>
    <property type="match status" value="1"/>
</dbReference>
<dbReference type="PANTHER" id="PTHR24171">
    <property type="entry name" value="ANKYRIN REPEAT DOMAIN-CONTAINING PROTEIN 39-RELATED"/>
    <property type="match status" value="1"/>
</dbReference>
<dbReference type="Pfam" id="PF00023">
    <property type="entry name" value="Ank"/>
    <property type="match status" value="2"/>
</dbReference>
<dbReference type="Pfam" id="PF12796">
    <property type="entry name" value="Ank_2"/>
    <property type="match status" value="1"/>
</dbReference>
<dbReference type="Pfam" id="PF09372">
    <property type="entry name" value="PRANC"/>
    <property type="match status" value="1"/>
</dbReference>
<dbReference type="SMART" id="SM00248">
    <property type="entry name" value="ANK"/>
    <property type="match status" value="5"/>
</dbReference>
<dbReference type="SUPFAM" id="SSF48403">
    <property type="entry name" value="Ankyrin repeat"/>
    <property type="match status" value="1"/>
</dbReference>
<dbReference type="SUPFAM" id="SSF160940">
    <property type="entry name" value="Api92-like"/>
    <property type="match status" value="1"/>
</dbReference>
<dbReference type="PROSITE" id="PS50297">
    <property type="entry name" value="ANK_REP_REGION"/>
    <property type="match status" value="1"/>
</dbReference>
<dbReference type="PROSITE" id="PS50088">
    <property type="entry name" value="ANK_REPEAT"/>
    <property type="match status" value="4"/>
</dbReference>
<proteinExistence type="predicted"/>
<sequence length="341" mass="39311">MPFLIELLRITGIVTLCPKYRLDRNSLLLVATKRNYIDVVRYLVKKGVDINFQETIRDNLTPLMIASRFNSHQLVELLLNNGAIINQRSLTCGNTALHLAVKNDNRITVDILLFHGANTNITNNDGFTPLHKAVIYNASIDIIKKLLRYKADVNIRDNEEENTGLTPLDIAMSCNNYEIISLLVSHVIRLDYSTCMSNKTKGFDHNKKLVKDNKRLQRIAIHCLKDIEKMKQVSINSRFTLFDLFVNNNVDLLLRCINKDNRFIVNFDKKLTVFNILYTDFIDTFMSRHVLLNKASKVLEDLFLDNDSNTSSWNNLPNEIKDHIFTYINNDELKIMTGSKT</sequence>
<gene>
    <name type="primary">ANK3</name>
    <name type="ordered locus">FPV031</name>
</gene>
<keyword id="KW-0040">ANK repeat</keyword>
<keyword id="KW-1185">Reference proteome</keyword>
<keyword id="KW-0677">Repeat</keyword>
<organism>
    <name type="scientific">Fowlpox virus (strain NVSL)</name>
    <name type="common">FPV</name>
    <dbReference type="NCBI Taxonomy" id="928301"/>
    <lineage>
        <taxon>Viruses</taxon>
        <taxon>Varidnaviria</taxon>
        <taxon>Bamfordvirae</taxon>
        <taxon>Nucleocytoviricota</taxon>
        <taxon>Pokkesviricetes</taxon>
        <taxon>Chitovirales</taxon>
        <taxon>Poxviridae</taxon>
        <taxon>Chordopoxvirinae</taxon>
        <taxon>Avipoxvirus</taxon>
        <taxon>Fowlpox virus</taxon>
    </lineage>
</organism>
<feature type="chain" id="PRO_0000067109" description="Putative ankyrin repeat protein FPV031">
    <location>
        <begin position="1"/>
        <end position="341"/>
    </location>
</feature>
<feature type="repeat" description="ANK 1">
    <location>
        <begin position="23"/>
        <end position="55"/>
    </location>
</feature>
<feature type="repeat" description="ANK 2">
    <location>
        <begin position="58"/>
        <end position="87"/>
    </location>
</feature>
<feature type="repeat" description="ANK 3">
    <location>
        <begin position="92"/>
        <end position="124"/>
    </location>
</feature>
<feature type="repeat" description="ANK 4">
    <location>
        <begin position="125"/>
        <end position="158"/>
    </location>
</feature>
<feature type="repeat" description="ANK 5">
    <location>
        <begin position="163"/>
        <end position="195"/>
    </location>
</feature>
<organismHost>
    <name type="scientific">Vertebrata</name>
    <dbReference type="NCBI Taxonomy" id="7742"/>
</organismHost>
<name>V031_FOWPN</name>
<reference key="1">
    <citation type="journal article" date="1998" name="J. Virol.">
        <title>Fowlpox virus encodes nonessential homologs of cellular alpha-SNAP, PC-1, and an orphan human homolog of a secreted nematode protein.</title>
        <authorList>
            <person name="Laidlaw S.M."/>
            <person name="Anwar M.A."/>
            <person name="Thomas W."/>
            <person name="Green P."/>
            <person name="Shaw K."/>
            <person name="Skinner M.A."/>
        </authorList>
    </citation>
    <scope>NUCLEOTIDE SEQUENCE [GENOMIC DNA]</scope>
    <source>
        <strain>FP-9 / Isolate HP-438</strain>
    </source>
</reference>
<reference key="2">
    <citation type="journal article" date="2000" name="J. Virol.">
        <title>The genome of fowlpox virus.</title>
        <authorList>
            <person name="Afonso C.L."/>
            <person name="Tulman E.R."/>
            <person name="Lu Z."/>
            <person name="Zsak L."/>
            <person name="Kutish G.F."/>
            <person name="Rock D.L."/>
        </authorList>
    </citation>
    <scope>NUCLEOTIDE SEQUENCE [LARGE SCALE GENOMIC DNA]</scope>
</reference>
<accession>O90760</accession>